<accession>Q69ZZ6</accession>
<accession>Q8CEF4</accession>
<protein>
    <recommendedName>
        <fullName evidence="1">Transmembrane and coiled-coil domains protein 1</fullName>
    </recommendedName>
</protein>
<gene>
    <name type="primary">Tmcc1</name>
    <name evidence="4" type="synonym">Kiaa0779</name>
</gene>
<evidence type="ECO:0000250" key="1">
    <source>
        <dbReference type="UniProtKB" id="O94876"/>
    </source>
</evidence>
<evidence type="ECO:0000255" key="2"/>
<evidence type="ECO:0000256" key="3">
    <source>
        <dbReference type="SAM" id="MobiDB-lite"/>
    </source>
</evidence>
<evidence type="ECO:0000303" key="4">
    <source>
    </source>
</evidence>
<evidence type="ECO:0000303" key="5">
    <source>
    </source>
</evidence>
<evidence type="ECO:0000305" key="6"/>
<evidence type="ECO:0007744" key="7">
    <source>
    </source>
</evidence>
<evidence type="ECO:0007744" key="8">
    <source>
    </source>
</evidence>
<comment type="function">
    <text evidence="1">Endoplasmic reticulum membrane protein that promotes endoplasmic reticulum-associated endosome fission. Localizes to contact sites between the endoplasmic reticulum and endosomes and acts by promoting recruitment of the endoplasmic reticulum to endosome tubules for fission. Endosome membrane fission of early and late endosomes is essential to separate regions destined for lysosomal degradation from carriers to be recycled to the plasma membrane.</text>
</comment>
<comment type="subunit">
    <text evidence="1">May form homodimers and heterodimers with TMCC2 or TMCC3 via the coiled-coil domains. Interacts with ribosomal proteins RPL4 and RPS6.</text>
</comment>
<comment type="subcellular location">
    <subcellularLocation>
        <location evidence="1">Endoplasmic reticulum membrane</location>
        <topology evidence="2">Multi-pass membrane protein</topology>
    </subcellularLocation>
    <text evidence="1">Specifically localizes to contact sites between the endoplasmic reticulum and endosomes that are spatially and temporally linked to endosome fission.</text>
</comment>
<comment type="alternative products">
    <event type="alternative splicing"/>
    <isoform>
        <id>Q69ZZ6-1</id>
        <name>1</name>
        <sequence type="displayed"/>
    </isoform>
    <isoform>
        <id>Q69ZZ6-2</id>
        <name>2</name>
        <sequence type="described" ref="VSP_019590 VSP_019591"/>
    </isoform>
    <isoform>
        <id>Q69ZZ6-3</id>
        <name>3</name>
        <sequence type="described" ref="VSP_019589"/>
    </isoform>
</comment>
<comment type="similarity">
    <text evidence="6">Belongs to the TEX28 family.</text>
</comment>
<comment type="sequence caution" evidence="6">
    <conflict type="erroneous initiation">
        <sequence resource="EMBL-CDS" id="BAD32300"/>
    </conflict>
</comment>
<comment type="sequence caution" evidence="6">
    <conflict type="erroneous initiation">
        <sequence resource="EMBL-CDS" id="BAE32665"/>
    </conflict>
</comment>
<reference key="1">
    <citation type="journal article" date="2004" name="DNA Res.">
        <title>Prediction of the coding sequences of mouse homologues of KIAA gene: IV. The complete nucleotide sequences of 500 mouse KIAA-homologous cDNAs identified by screening of terminal sequences of cDNA clones randomly sampled from size-fractionated libraries.</title>
        <authorList>
            <person name="Okazaki N."/>
            <person name="Kikuno R."/>
            <person name="Ohara R."/>
            <person name="Inamoto S."/>
            <person name="Koseki H."/>
            <person name="Hiraoka S."/>
            <person name="Saga Y."/>
            <person name="Seino S."/>
            <person name="Nishimura M."/>
            <person name="Kaisho T."/>
            <person name="Hoshino K."/>
            <person name="Kitamura H."/>
            <person name="Nagase T."/>
            <person name="Ohara O."/>
            <person name="Koga H."/>
        </authorList>
    </citation>
    <scope>NUCLEOTIDE SEQUENCE [LARGE SCALE MRNA] (ISOFORM 1)</scope>
    <source>
        <tissue>Brain</tissue>
    </source>
</reference>
<reference key="2">
    <citation type="journal article" date="2005" name="Science">
        <title>The transcriptional landscape of the mammalian genome.</title>
        <authorList>
            <person name="Carninci P."/>
            <person name="Kasukawa T."/>
            <person name="Katayama S."/>
            <person name="Gough J."/>
            <person name="Frith M.C."/>
            <person name="Maeda N."/>
            <person name="Oyama R."/>
            <person name="Ravasi T."/>
            <person name="Lenhard B."/>
            <person name="Wells C."/>
            <person name="Kodzius R."/>
            <person name="Shimokawa K."/>
            <person name="Bajic V.B."/>
            <person name="Brenner S.E."/>
            <person name="Batalov S."/>
            <person name="Forrest A.R."/>
            <person name="Zavolan M."/>
            <person name="Davis M.J."/>
            <person name="Wilming L.G."/>
            <person name="Aidinis V."/>
            <person name="Allen J.E."/>
            <person name="Ambesi-Impiombato A."/>
            <person name="Apweiler R."/>
            <person name="Aturaliya R.N."/>
            <person name="Bailey T.L."/>
            <person name="Bansal M."/>
            <person name="Baxter L."/>
            <person name="Beisel K.W."/>
            <person name="Bersano T."/>
            <person name="Bono H."/>
            <person name="Chalk A.M."/>
            <person name="Chiu K.P."/>
            <person name="Choudhary V."/>
            <person name="Christoffels A."/>
            <person name="Clutterbuck D.R."/>
            <person name="Crowe M.L."/>
            <person name="Dalla E."/>
            <person name="Dalrymple B.P."/>
            <person name="de Bono B."/>
            <person name="Della Gatta G."/>
            <person name="di Bernardo D."/>
            <person name="Down T."/>
            <person name="Engstrom P."/>
            <person name="Fagiolini M."/>
            <person name="Faulkner G."/>
            <person name="Fletcher C.F."/>
            <person name="Fukushima T."/>
            <person name="Furuno M."/>
            <person name="Futaki S."/>
            <person name="Gariboldi M."/>
            <person name="Georgii-Hemming P."/>
            <person name="Gingeras T.R."/>
            <person name="Gojobori T."/>
            <person name="Green R.E."/>
            <person name="Gustincich S."/>
            <person name="Harbers M."/>
            <person name="Hayashi Y."/>
            <person name="Hensch T.K."/>
            <person name="Hirokawa N."/>
            <person name="Hill D."/>
            <person name="Huminiecki L."/>
            <person name="Iacono M."/>
            <person name="Ikeo K."/>
            <person name="Iwama A."/>
            <person name="Ishikawa T."/>
            <person name="Jakt M."/>
            <person name="Kanapin A."/>
            <person name="Katoh M."/>
            <person name="Kawasawa Y."/>
            <person name="Kelso J."/>
            <person name="Kitamura H."/>
            <person name="Kitano H."/>
            <person name="Kollias G."/>
            <person name="Krishnan S.P."/>
            <person name="Kruger A."/>
            <person name="Kummerfeld S.K."/>
            <person name="Kurochkin I.V."/>
            <person name="Lareau L.F."/>
            <person name="Lazarevic D."/>
            <person name="Lipovich L."/>
            <person name="Liu J."/>
            <person name="Liuni S."/>
            <person name="McWilliam S."/>
            <person name="Madan Babu M."/>
            <person name="Madera M."/>
            <person name="Marchionni L."/>
            <person name="Matsuda H."/>
            <person name="Matsuzawa S."/>
            <person name="Miki H."/>
            <person name="Mignone F."/>
            <person name="Miyake S."/>
            <person name="Morris K."/>
            <person name="Mottagui-Tabar S."/>
            <person name="Mulder N."/>
            <person name="Nakano N."/>
            <person name="Nakauchi H."/>
            <person name="Ng P."/>
            <person name="Nilsson R."/>
            <person name="Nishiguchi S."/>
            <person name="Nishikawa S."/>
            <person name="Nori F."/>
            <person name="Ohara O."/>
            <person name="Okazaki Y."/>
            <person name="Orlando V."/>
            <person name="Pang K.C."/>
            <person name="Pavan W.J."/>
            <person name="Pavesi G."/>
            <person name="Pesole G."/>
            <person name="Petrovsky N."/>
            <person name="Piazza S."/>
            <person name="Reed J."/>
            <person name="Reid J.F."/>
            <person name="Ring B.Z."/>
            <person name="Ringwald M."/>
            <person name="Rost B."/>
            <person name="Ruan Y."/>
            <person name="Salzberg S.L."/>
            <person name="Sandelin A."/>
            <person name="Schneider C."/>
            <person name="Schoenbach C."/>
            <person name="Sekiguchi K."/>
            <person name="Semple C.A."/>
            <person name="Seno S."/>
            <person name="Sessa L."/>
            <person name="Sheng Y."/>
            <person name="Shibata Y."/>
            <person name="Shimada H."/>
            <person name="Shimada K."/>
            <person name="Silva D."/>
            <person name="Sinclair B."/>
            <person name="Sperling S."/>
            <person name="Stupka E."/>
            <person name="Sugiura K."/>
            <person name="Sultana R."/>
            <person name="Takenaka Y."/>
            <person name="Taki K."/>
            <person name="Tammoja K."/>
            <person name="Tan S.L."/>
            <person name="Tang S."/>
            <person name="Taylor M.S."/>
            <person name="Tegner J."/>
            <person name="Teichmann S.A."/>
            <person name="Ueda H.R."/>
            <person name="van Nimwegen E."/>
            <person name="Verardo R."/>
            <person name="Wei C.L."/>
            <person name="Yagi K."/>
            <person name="Yamanishi H."/>
            <person name="Zabarovsky E."/>
            <person name="Zhu S."/>
            <person name="Zimmer A."/>
            <person name="Hide W."/>
            <person name="Bult C."/>
            <person name="Grimmond S.M."/>
            <person name="Teasdale R.D."/>
            <person name="Liu E.T."/>
            <person name="Brusic V."/>
            <person name="Quackenbush J."/>
            <person name="Wahlestedt C."/>
            <person name="Mattick J.S."/>
            <person name="Hume D.A."/>
            <person name="Kai C."/>
            <person name="Sasaki D."/>
            <person name="Tomaru Y."/>
            <person name="Fukuda S."/>
            <person name="Kanamori-Katayama M."/>
            <person name="Suzuki M."/>
            <person name="Aoki J."/>
            <person name="Arakawa T."/>
            <person name="Iida J."/>
            <person name="Imamura K."/>
            <person name="Itoh M."/>
            <person name="Kato T."/>
            <person name="Kawaji H."/>
            <person name="Kawagashira N."/>
            <person name="Kawashima T."/>
            <person name="Kojima M."/>
            <person name="Kondo S."/>
            <person name="Konno H."/>
            <person name="Nakano K."/>
            <person name="Ninomiya N."/>
            <person name="Nishio T."/>
            <person name="Okada M."/>
            <person name="Plessy C."/>
            <person name="Shibata K."/>
            <person name="Shiraki T."/>
            <person name="Suzuki S."/>
            <person name="Tagami M."/>
            <person name="Waki K."/>
            <person name="Watahiki A."/>
            <person name="Okamura-Oho Y."/>
            <person name="Suzuki H."/>
            <person name="Kawai J."/>
            <person name="Hayashizaki Y."/>
        </authorList>
    </citation>
    <scope>NUCLEOTIDE SEQUENCE [LARGE SCALE MRNA] (ISOFORMS 2 AND 3)</scope>
    <source>
        <strain>C57BL/6J</strain>
        <strain>NOD</strain>
        <tissue>Brain</tissue>
    </source>
</reference>
<reference key="3">
    <citation type="journal article" date="2004" name="Mol. Cell. Proteomics">
        <title>Phosphoproteomic analysis of the developing mouse brain.</title>
        <authorList>
            <person name="Ballif B.A."/>
            <person name="Villen J."/>
            <person name="Beausoleil S.A."/>
            <person name="Schwartz D."/>
            <person name="Gygi S.P."/>
        </authorList>
    </citation>
    <scope>IDENTIFICATION BY MASS SPECTROMETRY [LARGE SCALE ANALYSIS]</scope>
    <source>
        <tissue>Embryonic brain</tissue>
    </source>
</reference>
<reference key="4">
    <citation type="journal article" date="2007" name="Proc. Natl. Acad. Sci. U.S.A.">
        <title>Large-scale phosphorylation analysis of mouse liver.</title>
        <authorList>
            <person name="Villen J."/>
            <person name="Beausoleil S.A."/>
            <person name="Gerber S.A."/>
            <person name="Gygi S.P."/>
        </authorList>
    </citation>
    <scope>PHOSPHORYLATION [LARGE SCALE ANALYSIS] AT SER-378 AND SER-410</scope>
    <scope>IDENTIFICATION BY MASS SPECTROMETRY [LARGE SCALE ANALYSIS]</scope>
    <source>
        <tissue>Liver</tissue>
    </source>
</reference>
<reference key="5">
    <citation type="journal article" date="2010" name="Cell">
        <title>A tissue-specific atlas of mouse protein phosphorylation and expression.</title>
        <authorList>
            <person name="Huttlin E.L."/>
            <person name="Jedrychowski M.P."/>
            <person name="Elias J.E."/>
            <person name="Goswami T."/>
            <person name="Rad R."/>
            <person name="Beausoleil S.A."/>
            <person name="Villen J."/>
            <person name="Haas W."/>
            <person name="Sowa M.E."/>
            <person name="Gygi S.P."/>
        </authorList>
    </citation>
    <scope>PHOSPHORYLATION [LARGE SCALE ANALYSIS] AT SER-378 AND SER-410</scope>
    <scope>IDENTIFICATION BY MASS SPECTROMETRY [LARGE SCALE ANALYSIS]</scope>
    <source>
        <tissue>Brain</tissue>
        <tissue>Brown adipose tissue</tissue>
        <tissue>Heart</tissue>
        <tissue>Kidney</tissue>
        <tissue>Liver</tissue>
        <tissue>Lung</tissue>
        <tissue>Spleen</tissue>
        <tissue>Testis</tissue>
    </source>
</reference>
<sequence>MEPSGSEQLYEDPDPGGKSQDAEARRQTESEQKLSKMTHNALENINVIGQGLKHLFQHQRRRSSVSPHDVQQIQTDPEPEVDLDSQNACAEIDGVSTHPTALNRVLQQIRVPPKMKRGTSLHSRRGKSEAPKGSPQINRKSGQEVAAVIQSGRPRSSSTTDAPTSSSVMEIACAAGVCVPGEEATAERIERLEVSSLAQTSSAVASSTDGSIHTESVDGIPDPQRTKAAIAHLQQKILKLTEQIKIAQTARDDNVAEYLKLANSADKQQAARIKQVFEKKNQKSAQTILQLQKKLEHYHRKLREVEQNGIPRQPKDVFRDMHQGLKDVGAKVTGFSEGVVDSVKGGFSSFSQATHSAAGAVVSKPREIASLIRNKFGSADNIPNLKDSLEEGQVDDGGKALGVISNFQSSPKYGSEEDCSSATSGSVGANSTTGGIAVGASSSKTNTLDMQSSGFDALLHEVQEIRETQARLEDSFETLKEHYQRDYSLIMQTLQEERYRCERLEEQLNDLTELHQNEILNLKQELASMEEKIAYQSYERARDIQEALEACQTRISKMELQQQQQQVVQLEGLENATARNLLGKLINILLAVMAVLLVFVSTVANCVVPLMKTRNRTFSTLFLVAFIAFLWKHWDALFSYVDRLFSPPR</sequence>
<proteinExistence type="evidence at protein level"/>
<organism>
    <name type="scientific">Mus musculus</name>
    <name type="common">Mouse</name>
    <dbReference type="NCBI Taxonomy" id="10090"/>
    <lineage>
        <taxon>Eukaryota</taxon>
        <taxon>Metazoa</taxon>
        <taxon>Chordata</taxon>
        <taxon>Craniata</taxon>
        <taxon>Vertebrata</taxon>
        <taxon>Euteleostomi</taxon>
        <taxon>Mammalia</taxon>
        <taxon>Eutheria</taxon>
        <taxon>Euarchontoglires</taxon>
        <taxon>Glires</taxon>
        <taxon>Rodentia</taxon>
        <taxon>Myomorpha</taxon>
        <taxon>Muroidea</taxon>
        <taxon>Muridae</taxon>
        <taxon>Murinae</taxon>
        <taxon>Mus</taxon>
        <taxon>Mus</taxon>
    </lineage>
</organism>
<keyword id="KW-0007">Acetylation</keyword>
<keyword id="KW-0025">Alternative splicing</keyword>
<keyword id="KW-0175">Coiled coil</keyword>
<keyword id="KW-0256">Endoplasmic reticulum</keyword>
<keyword id="KW-0472">Membrane</keyword>
<keyword id="KW-0597">Phosphoprotein</keyword>
<keyword id="KW-1185">Reference proteome</keyword>
<keyword id="KW-0812">Transmembrane</keyword>
<keyword id="KW-1133">Transmembrane helix</keyword>
<keyword id="KW-0813">Transport</keyword>
<dbReference type="EMBL" id="AK173022">
    <property type="protein sequence ID" value="BAD32300.1"/>
    <property type="status" value="ALT_INIT"/>
    <property type="molecule type" value="mRNA"/>
</dbReference>
<dbReference type="EMBL" id="AK028322">
    <property type="protein sequence ID" value="BAC25880.1"/>
    <property type="molecule type" value="mRNA"/>
</dbReference>
<dbReference type="EMBL" id="AK154540">
    <property type="protein sequence ID" value="BAE32665.1"/>
    <property type="status" value="ALT_INIT"/>
    <property type="molecule type" value="mRNA"/>
</dbReference>
<dbReference type="CCDS" id="CCDS51881.1">
    <molecule id="Q69ZZ6-1"/>
</dbReference>
<dbReference type="CCDS" id="CCDS90105.1">
    <molecule id="Q69ZZ6-3"/>
</dbReference>
<dbReference type="RefSeq" id="NP_001351506.1">
    <molecule id="Q69ZZ6-3"/>
    <property type="nucleotide sequence ID" value="NM_001364577.1"/>
</dbReference>
<dbReference type="RefSeq" id="NP_803131.1">
    <molecule id="Q69ZZ6-1"/>
    <property type="nucleotide sequence ID" value="NM_177412.1"/>
</dbReference>
<dbReference type="RefSeq" id="XP_006506371.1">
    <molecule id="Q69ZZ6-1"/>
    <property type="nucleotide sequence ID" value="XM_006506308.4"/>
</dbReference>
<dbReference type="RefSeq" id="XP_006506373.1">
    <molecule id="Q69ZZ6-2"/>
    <property type="nucleotide sequence ID" value="XM_006506310.1"/>
</dbReference>
<dbReference type="RefSeq" id="XP_006506377.1">
    <property type="nucleotide sequence ID" value="XM_006506314.3"/>
</dbReference>
<dbReference type="RefSeq" id="XP_017177146.1">
    <molecule id="Q69ZZ6-3"/>
    <property type="nucleotide sequence ID" value="XM_017321657.3"/>
</dbReference>
<dbReference type="RefSeq" id="XP_030111345.1">
    <molecule id="Q69ZZ6-1"/>
    <property type="nucleotide sequence ID" value="XM_030255485.2"/>
</dbReference>
<dbReference type="RefSeq" id="XP_036022145.1">
    <molecule id="Q69ZZ6-3"/>
    <property type="nucleotide sequence ID" value="XM_036166252.1"/>
</dbReference>
<dbReference type="SMR" id="Q69ZZ6"/>
<dbReference type="BioGRID" id="236954">
    <property type="interactions" value="2"/>
</dbReference>
<dbReference type="FunCoup" id="Q69ZZ6">
    <property type="interactions" value="2521"/>
</dbReference>
<dbReference type="STRING" id="10090.ENSMUSP00000086285"/>
<dbReference type="iPTMnet" id="Q69ZZ6"/>
<dbReference type="PhosphoSitePlus" id="Q69ZZ6"/>
<dbReference type="jPOST" id="Q69ZZ6"/>
<dbReference type="PaxDb" id="10090-ENSMUSP00000086285"/>
<dbReference type="ProteomicsDB" id="259569">
    <molecule id="Q69ZZ6-1"/>
</dbReference>
<dbReference type="ProteomicsDB" id="259570">
    <molecule id="Q69ZZ6-2"/>
</dbReference>
<dbReference type="ProteomicsDB" id="259571">
    <molecule id="Q69ZZ6-3"/>
</dbReference>
<dbReference type="Antibodypedia" id="33295">
    <property type="antibodies" value="106 antibodies from 19 providers"/>
</dbReference>
<dbReference type="Ensembl" id="ENSMUST00000088896.10">
    <molecule id="Q69ZZ6-1"/>
    <property type="protein sequence ID" value="ENSMUSP00000086285.4"/>
    <property type="gene ID" value="ENSMUSG00000030126.18"/>
</dbReference>
<dbReference type="Ensembl" id="ENSMUST00000172510.4">
    <molecule id="Q69ZZ6-3"/>
    <property type="protein sequence ID" value="ENSMUSP00000133665.3"/>
    <property type="gene ID" value="ENSMUSG00000030126.18"/>
</dbReference>
<dbReference type="Ensembl" id="ENSMUST00000173140.4">
    <molecule id="Q69ZZ6-3"/>
    <property type="protein sequence ID" value="ENSMUSP00000134455.3"/>
    <property type="gene ID" value="ENSMUSG00000030126.18"/>
</dbReference>
<dbReference type="Ensembl" id="ENSMUST00000204353.3">
    <molecule id="Q69ZZ6-2"/>
    <property type="protein sequence ID" value="ENSMUSP00000144971.2"/>
    <property type="gene ID" value="ENSMUSG00000030126.18"/>
</dbReference>
<dbReference type="GeneID" id="330401"/>
<dbReference type="KEGG" id="mmu:330401"/>
<dbReference type="UCSC" id="uc009djo.2">
    <molecule id="Q69ZZ6-1"/>
    <property type="organism name" value="mouse"/>
</dbReference>
<dbReference type="UCSC" id="uc009djp.2">
    <molecule id="Q69ZZ6-2"/>
    <property type="organism name" value="mouse"/>
</dbReference>
<dbReference type="AGR" id="MGI:2442368"/>
<dbReference type="CTD" id="23023"/>
<dbReference type="MGI" id="MGI:2442368">
    <property type="gene designation" value="Tmcc1"/>
</dbReference>
<dbReference type="VEuPathDB" id="HostDB:ENSMUSG00000030126"/>
<dbReference type="eggNOG" id="KOG3850">
    <property type="taxonomic scope" value="Eukaryota"/>
</dbReference>
<dbReference type="GeneTree" id="ENSGT00940000155189"/>
<dbReference type="InParanoid" id="Q69ZZ6"/>
<dbReference type="OMA" id="WEAISEY"/>
<dbReference type="PhylomeDB" id="Q69ZZ6"/>
<dbReference type="TreeFam" id="TF316292"/>
<dbReference type="BioGRID-ORCS" id="330401">
    <property type="hits" value="2 hits in 78 CRISPR screens"/>
</dbReference>
<dbReference type="ChiTaRS" id="Tmcc1">
    <property type="organism name" value="mouse"/>
</dbReference>
<dbReference type="PRO" id="PR:Q69ZZ6"/>
<dbReference type="Proteomes" id="UP000000589">
    <property type="component" value="Chromosome 6"/>
</dbReference>
<dbReference type="RNAct" id="Q69ZZ6">
    <property type="molecule type" value="protein"/>
</dbReference>
<dbReference type="Bgee" id="ENSMUSG00000030126">
    <property type="expression patterns" value="Expressed in granulocyte and 234 other cell types or tissues"/>
</dbReference>
<dbReference type="ExpressionAtlas" id="Q69ZZ6">
    <property type="expression patterns" value="baseline and differential"/>
</dbReference>
<dbReference type="GO" id="GO:0005829">
    <property type="term" value="C:cytosol"/>
    <property type="evidence" value="ECO:0007669"/>
    <property type="project" value="Ensembl"/>
</dbReference>
<dbReference type="GO" id="GO:0005789">
    <property type="term" value="C:endoplasmic reticulum membrane"/>
    <property type="evidence" value="ECO:0007669"/>
    <property type="project" value="UniProtKB-SubCell"/>
</dbReference>
<dbReference type="GO" id="GO:0140284">
    <property type="term" value="C:endoplasmic reticulum-endosome membrane contact site"/>
    <property type="evidence" value="ECO:0000250"/>
    <property type="project" value="UniProtKB"/>
</dbReference>
<dbReference type="GO" id="GO:0005791">
    <property type="term" value="C:rough endoplasmic reticulum"/>
    <property type="evidence" value="ECO:0007669"/>
    <property type="project" value="Ensembl"/>
</dbReference>
<dbReference type="GO" id="GO:0042802">
    <property type="term" value="F:identical protein binding"/>
    <property type="evidence" value="ECO:0007669"/>
    <property type="project" value="Ensembl"/>
</dbReference>
<dbReference type="GO" id="GO:0007029">
    <property type="term" value="P:endoplasmic reticulum organization"/>
    <property type="evidence" value="ECO:0007669"/>
    <property type="project" value="Ensembl"/>
</dbReference>
<dbReference type="GO" id="GO:0016197">
    <property type="term" value="P:endosomal transport"/>
    <property type="evidence" value="ECO:0000250"/>
    <property type="project" value="UniProtKB"/>
</dbReference>
<dbReference type="GO" id="GO:0140285">
    <property type="term" value="P:endosome fission"/>
    <property type="evidence" value="ECO:0000250"/>
    <property type="project" value="UniProtKB"/>
</dbReference>
<dbReference type="GO" id="GO:0097750">
    <property type="term" value="P:endosome membrane tubulation"/>
    <property type="evidence" value="ECO:0000250"/>
    <property type="project" value="UniProtKB"/>
</dbReference>
<dbReference type="GO" id="GO:0090148">
    <property type="term" value="P:membrane fission"/>
    <property type="evidence" value="ECO:0000250"/>
    <property type="project" value="UniProtKB"/>
</dbReference>
<dbReference type="InterPro" id="IPR019394">
    <property type="entry name" value="TEX28/TMCC"/>
</dbReference>
<dbReference type="PANTHER" id="PTHR17613">
    <property type="entry name" value="CEREBRAL PROTEIN-11-RELATED"/>
    <property type="match status" value="1"/>
</dbReference>
<dbReference type="PANTHER" id="PTHR17613:SF11">
    <property type="entry name" value="TRANSMEMBRANE AND COILED-COIL DOMAINS PROTEIN 1"/>
    <property type="match status" value="1"/>
</dbReference>
<dbReference type="Pfam" id="PF10267">
    <property type="entry name" value="Tmemb_cc2"/>
    <property type="match status" value="1"/>
</dbReference>
<feature type="chain" id="PRO_0000184596" description="Transmembrane and coiled-coil domains protein 1">
    <location>
        <begin position="1"/>
        <end position="649"/>
    </location>
</feature>
<feature type="topological domain" description="Cytoplasmic" evidence="2">
    <location>
        <begin position="1"/>
        <end position="587"/>
    </location>
</feature>
<feature type="transmembrane region" description="Helical" evidence="2">
    <location>
        <begin position="588"/>
        <end position="608"/>
    </location>
</feature>
<feature type="transmembrane region" description="Helical" evidence="2">
    <location>
        <begin position="621"/>
        <end position="641"/>
    </location>
</feature>
<feature type="topological domain" description="Cytoplasmic" evidence="2">
    <location>
        <begin position="642"/>
        <end position="649"/>
    </location>
</feature>
<feature type="region of interest" description="Disordered" evidence="3">
    <location>
        <begin position="1"/>
        <end position="37"/>
    </location>
</feature>
<feature type="region of interest" description="Disordered" evidence="3">
    <location>
        <begin position="58"/>
        <end position="83"/>
    </location>
</feature>
<feature type="region of interest" description="Disordered" evidence="3">
    <location>
        <begin position="110"/>
        <end position="166"/>
    </location>
</feature>
<feature type="region of interest" description="Disordered" evidence="3">
    <location>
        <begin position="197"/>
        <end position="222"/>
    </location>
</feature>
<feature type="region of interest" description="Disordered" evidence="3">
    <location>
        <begin position="411"/>
        <end position="433"/>
    </location>
</feature>
<feature type="coiled-coil region" evidence="2">
    <location>
        <begin position="224"/>
        <end position="310"/>
    </location>
</feature>
<feature type="coiled-coil region" evidence="2">
    <location>
        <begin position="457"/>
        <end position="566"/>
    </location>
</feature>
<feature type="compositionally biased region" description="Basic and acidic residues" evidence="3">
    <location>
        <begin position="20"/>
        <end position="34"/>
    </location>
</feature>
<feature type="compositionally biased region" description="Polar residues" evidence="3">
    <location>
        <begin position="64"/>
        <end position="75"/>
    </location>
</feature>
<feature type="compositionally biased region" description="Basic residues" evidence="3">
    <location>
        <begin position="113"/>
        <end position="125"/>
    </location>
</feature>
<feature type="compositionally biased region" description="Low complexity" evidence="3">
    <location>
        <begin position="156"/>
        <end position="166"/>
    </location>
</feature>
<feature type="compositionally biased region" description="Polar residues" evidence="3">
    <location>
        <begin position="197"/>
        <end position="214"/>
    </location>
</feature>
<feature type="compositionally biased region" description="Polar residues" evidence="3">
    <location>
        <begin position="420"/>
        <end position="433"/>
    </location>
</feature>
<feature type="modified residue" description="N-acetylmethionine" evidence="1">
    <location>
        <position position="1"/>
    </location>
</feature>
<feature type="modified residue" description="Phosphoserine" evidence="7 8">
    <location>
        <position position="378"/>
    </location>
</feature>
<feature type="modified residue" description="Phosphoserine" evidence="7 8">
    <location>
        <position position="410"/>
    </location>
</feature>
<feature type="splice variant" id="VSP_019589" description="In isoform 3." evidence="5">
    <location>
        <begin position="1"/>
        <end position="320"/>
    </location>
</feature>
<feature type="splice variant" id="VSP_019590" description="In isoform 2." evidence="5">
    <location>
        <begin position="1"/>
        <end position="175"/>
    </location>
</feature>
<feature type="splice variant" id="VSP_019591" description="In isoform 2." evidence="5">
    <original>GVCVPGEEATAER</original>
    <variation>MVQRFSLRRQLSK</variation>
    <location>
        <begin position="176"/>
        <end position="188"/>
    </location>
</feature>
<name>TMCC1_MOUSE</name>